<accession>Q9SDK9</accession>
<accession>A0A0N7KCP2</accession>
<evidence type="ECO:0000250" key="1"/>
<evidence type="ECO:0000250" key="2">
    <source>
        <dbReference type="UniProtKB" id="P35244"/>
    </source>
</evidence>
<evidence type="ECO:0000269" key="3">
    <source>
    </source>
</evidence>
<evidence type="ECO:0000269" key="4">
    <source>
    </source>
</evidence>
<evidence type="ECO:0000305" key="5"/>
<sequence>MDTSGPAAFVNGEILKMFVGRRVRTVVQAQREEGGLLIGQSTDGHQLTIKGASGAPMSHYVEIIGIAEPNQAIRAEVCTDFGENFDPAPFNGLCKLANGQMKDLFL</sequence>
<organism>
    <name type="scientific">Oryza sativa subsp. japonica</name>
    <name type="common">Rice</name>
    <dbReference type="NCBI Taxonomy" id="39947"/>
    <lineage>
        <taxon>Eukaryota</taxon>
        <taxon>Viridiplantae</taxon>
        <taxon>Streptophyta</taxon>
        <taxon>Embryophyta</taxon>
        <taxon>Tracheophyta</taxon>
        <taxon>Spermatophyta</taxon>
        <taxon>Magnoliopsida</taxon>
        <taxon>Liliopsida</taxon>
        <taxon>Poales</taxon>
        <taxon>Poaceae</taxon>
        <taxon>BOP clade</taxon>
        <taxon>Oryzoideae</taxon>
        <taxon>Oryzeae</taxon>
        <taxon>Oryzinae</taxon>
        <taxon>Oryza</taxon>
        <taxon>Oryza sativa</taxon>
    </lineage>
</organism>
<feature type="chain" id="PRO_0000422628" description="Replication protein A 14 kDa subunit">
    <location>
        <begin position="1"/>
        <end position="106"/>
    </location>
</feature>
<dbReference type="EMBL" id="AB111915">
    <property type="protein sequence ID" value="BAD06873.1"/>
    <property type="molecule type" value="mRNA"/>
</dbReference>
<dbReference type="EMBL" id="AP000492">
    <property type="protein sequence ID" value="BAA84607.1"/>
    <property type="molecule type" value="Genomic_DNA"/>
</dbReference>
<dbReference type="EMBL" id="AP008207">
    <property type="protein sequence ID" value="BAF04527.1"/>
    <property type="molecule type" value="Genomic_DNA"/>
</dbReference>
<dbReference type="EMBL" id="AP014957">
    <property type="protein sequence ID" value="BAS71369.1"/>
    <property type="molecule type" value="Genomic_DNA"/>
</dbReference>
<dbReference type="EMBL" id="CM000138">
    <property type="protein sequence ID" value="EAZ11276.1"/>
    <property type="molecule type" value="Genomic_DNA"/>
</dbReference>
<dbReference type="EMBL" id="AK058837">
    <property type="protein sequence ID" value="BAG86810.1"/>
    <property type="molecule type" value="mRNA"/>
</dbReference>
<dbReference type="RefSeq" id="XP_015626750.1">
    <property type="nucleotide sequence ID" value="XM_015771264.1"/>
</dbReference>
<dbReference type="RefSeq" id="XP_015626758.1">
    <property type="nucleotide sequence ID" value="XM_015771272.1"/>
</dbReference>
<dbReference type="SMR" id="Q9SDK9"/>
<dbReference type="FunCoup" id="Q9SDK9">
    <property type="interactions" value="140"/>
</dbReference>
<dbReference type="IntAct" id="Q9SDK9">
    <property type="interactions" value="3"/>
</dbReference>
<dbReference type="STRING" id="39947.Q9SDK9"/>
<dbReference type="PaxDb" id="39947-Q9SDK9"/>
<dbReference type="EnsemblPlants" id="Os01t0253600-01">
    <property type="protein sequence ID" value="Os01t0253600-01"/>
    <property type="gene ID" value="Os01g0253600"/>
</dbReference>
<dbReference type="GeneID" id="4327706"/>
<dbReference type="Gramene" id="Os01t0253600-01">
    <property type="protein sequence ID" value="Os01t0253600-01"/>
    <property type="gene ID" value="Os01g0253600"/>
</dbReference>
<dbReference type="KEGG" id="dosa:Os01g0253600"/>
<dbReference type="KEGG" id="osa:4327706"/>
<dbReference type="eggNOG" id="ENOG502S57Y">
    <property type="taxonomic scope" value="Eukaryota"/>
</dbReference>
<dbReference type="HOGENOM" id="CLU_141922_3_0_1"/>
<dbReference type="InParanoid" id="Q9SDK9"/>
<dbReference type="OMA" id="IRAEVWT"/>
<dbReference type="OrthoDB" id="188186at2759"/>
<dbReference type="PlantReactome" id="R-OSA-9645850">
    <property type="pathway name" value="Activation of pre-replication complex"/>
</dbReference>
<dbReference type="PlantReactome" id="R-OSA-9675782">
    <property type="pathway name" value="Maturation"/>
</dbReference>
<dbReference type="PlantReactome" id="R-OSA-9675885">
    <property type="pathway name" value="Lagging strand synthesis"/>
</dbReference>
<dbReference type="Proteomes" id="UP000000763">
    <property type="component" value="Chromosome 1"/>
</dbReference>
<dbReference type="Proteomes" id="UP000007752">
    <property type="component" value="Chromosome 1"/>
</dbReference>
<dbReference type="Proteomes" id="UP000059680">
    <property type="component" value="Chromosome 1"/>
</dbReference>
<dbReference type="GO" id="GO:0031981">
    <property type="term" value="C:nuclear lumen"/>
    <property type="evidence" value="ECO:0007669"/>
    <property type="project" value="UniProtKB-ARBA"/>
</dbReference>
<dbReference type="GO" id="GO:0003677">
    <property type="term" value="F:DNA binding"/>
    <property type="evidence" value="ECO:0007669"/>
    <property type="project" value="UniProtKB-KW"/>
</dbReference>
<dbReference type="GO" id="GO:0006310">
    <property type="term" value="P:DNA recombination"/>
    <property type="evidence" value="ECO:0007669"/>
    <property type="project" value="UniProtKB-KW"/>
</dbReference>
<dbReference type="GO" id="GO:0006281">
    <property type="term" value="P:DNA repair"/>
    <property type="evidence" value="ECO:0007669"/>
    <property type="project" value="UniProtKB-KW"/>
</dbReference>
<dbReference type="GO" id="GO:0006260">
    <property type="term" value="P:DNA replication"/>
    <property type="evidence" value="ECO:0007669"/>
    <property type="project" value="UniProtKB-KW"/>
</dbReference>
<dbReference type="CDD" id="cd04479">
    <property type="entry name" value="RPA3"/>
    <property type="match status" value="1"/>
</dbReference>
<dbReference type="Gene3D" id="2.40.50.140">
    <property type="entry name" value="Nucleic acid-binding proteins"/>
    <property type="match status" value="1"/>
</dbReference>
<dbReference type="InterPro" id="IPR012340">
    <property type="entry name" value="NA-bd_OB-fold"/>
</dbReference>
<dbReference type="InterPro" id="IPR013970">
    <property type="entry name" value="Rfa2"/>
</dbReference>
<dbReference type="PANTHER" id="PTHR47058">
    <property type="entry name" value="REPLICATION PROTEIN A 14 KDA SUBUNIT A-RELATED"/>
    <property type="match status" value="1"/>
</dbReference>
<dbReference type="PANTHER" id="PTHR47058:SF3">
    <property type="entry name" value="REPLICATION PROTEIN A 14 KDA SUBUNIT A-RELATED"/>
    <property type="match status" value="1"/>
</dbReference>
<dbReference type="Pfam" id="PF08661">
    <property type="entry name" value="Rep_fac-A_3"/>
    <property type="match status" value="1"/>
</dbReference>
<dbReference type="SUPFAM" id="SSF50249">
    <property type="entry name" value="Nucleic acid-binding proteins"/>
    <property type="match status" value="1"/>
</dbReference>
<protein>
    <recommendedName>
        <fullName>Replication protein A 14 kDa subunit</fullName>
        <shortName>OsRPA14</shortName>
    </recommendedName>
    <alternativeName>
        <fullName>Replication factor A protein 3</fullName>
    </alternativeName>
    <alternativeName>
        <fullName>Replication protein A 3</fullName>
    </alternativeName>
</protein>
<comment type="function">
    <text evidence="2">As part of the replication protein A (RPA/RP-A), a single-stranded DNA-binding heterotrimeric complex, may play an essential role in DNA replication, recombination and repair. Binds and stabilizes single-stranded DNA intermediates, preventing complementary DNA reannealing and recruiting different proteins involved in DNA metabolism.</text>
</comment>
<comment type="subunit">
    <text evidence="1 3 4">Component of the heterotrimeric canonical replication protein A complex (RPA) (By similarity). Interacts with RPA1B, RPA2A, RPA2B and RPA2C.</text>
</comment>
<comment type="interaction">
    <interactant intactId="EBI-849521">
        <id>Q9SDK9</id>
    </interactant>
    <interactant intactId="EBI-849513">
        <id>Q6K9U2</id>
        <label>RPA2A</label>
    </interactant>
    <organismsDiffer>false</organismsDiffer>
    <experiments>5</experiments>
</comment>
<comment type="interaction">
    <interactant intactId="EBI-849521">
        <id>Q9SDK9</id>
    </interactant>
    <interactant intactId="EBI-849532">
        <id>Q6H7J5</id>
        <label>RPA2B</label>
    </interactant>
    <organismsDiffer>false</organismsDiffer>
    <experiments>2</experiments>
</comment>
<comment type="interaction">
    <interactant intactId="EBI-849521">
        <id>Q9SDK9</id>
    </interactant>
    <interactant intactId="EBI-849544">
        <id>Q5Z8L1</id>
        <label>RPA2C</label>
    </interactant>
    <organismsDiffer>false</organismsDiffer>
    <experiments>2</experiments>
</comment>
<comment type="subcellular location">
    <subcellularLocation>
        <location evidence="1">Nucleus</location>
    </subcellularLocation>
</comment>
<comment type="similarity">
    <text evidence="5">Belongs to the replication factor A protein 3 family.</text>
</comment>
<proteinExistence type="evidence at protein level"/>
<name>RFA3_ORYSJ</name>
<gene>
    <name type="primary">RPA3</name>
    <name type="synonym">RPA14</name>
    <name type="ordered locus">Os01g0253600</name>
    <name type="ordered locus">LOC_Os01g14980</name>
    <name type="ORF">OsJ_01130</name>
    <name type="ORF">P0705D01.4</name>
</gene>
<reference key="1">
    <citation type="journal article" date="2005" name="FEBS J.">
        <title>Two types of replication protein A in seed plants.</title>
        <authorList>
            <person name="Ishibashi T."/>
            <person name="Koga A."/>
            <person name="Yamamoto T."/>
            <person name="Uchiyama Y."/>
            <person name="Mori Y."/>
            <person name="Hashimoto J."/>
            <person name="Kimura S."/>
            <person name="Sakaguchi K."/>
        </authorList>
    </citation>
    <scope>NUCLEOTIDE SEQUENCE [MRNA]</scope>
    <scope>INTERACTION WITH RPA1B AND RPA2A</scope>
    <source>
        <strain>cv. Nipponbare</strain>
    </source>
</reference>
<reference key="2">
    <citation type="journal article" date="2002" name="Nature">
        <title>The genome sequence and structure of rice chromosome 1.</title>
        <authorList>
            <person name="Sasaki T."/>
            <person name="Matsumoto T."/>
            <person name="Yamamoto K."/>
            <person name="Sakata K."/>
            <person name="Baba T."/>
            <person name="Katayose Y."/>
            <person name="Wu J."/>
            <person name="Niimura Y."/>
            <person name="Cheng Z."/>
            <person name="Nagamura Y."/>
            <person name="Antonio B.A."/>
            <person name="Kanamori H."/>
            <person name="Hosokawa S."/>
            <person name="Masukawa M."/>
            <person name="Arikawa K."/>
            <person name="Chiden Y."/>
            <person name="Hayashi M."/>
            <person name="Okamoto M."/>
            <person name="Ando T."/>
            <person name="Aoki H."/>
            <person name="Arita K."/>
            <person name="Hamada M."/>
            <person name="Harada C."/>
            <person name="Hijishita S."/>
            <person name="Honda M."/>
            <person name="Ichikawa Y."/>
            <person name="Idonuma A."/>
            <person name="Iijima M."/>
            <person name="Ikeda M."/>
            <person name="Ikeno M."/>
            <person name="Ito S."/>
            <person name="Ito T."/>
            <person name="Ito Y."/>
            <person name="Ito Y."/>
            <person name="Iwabuchi A."/>
            <person name="Kamiya K."/>
            <person name="Karasawa W."/>
            <person name="Katagiri S."/>
            <person name="Kikuta A."/>
            <person name="Kobayashi N."/>
            <person name="Kono I."/>
            <person name="Machita K."/>
            <person name="Maehara T."/>
            <person name="Mizuno H."/>
            <person name="Mizubayashi T."/>
            <person name="Mukai Y."/>
            <person name="Nagasaki H."/>
            <person name="Nakashima M."/>
            <person name="Nakama Y."/>
            <person name="Nakamichi Y."/>
            <person name="Nakamura M."/>
            <person name="Namiki N."/>
            <person name="Negishi M."/>
            <person name="Ohta I."/>
            <person name="Ono N."/>
            <person name="Saji S."/>
            <person name="Sakai K."/>
            <person name="Shibata M."/>
            <person name="Shimokawa T."/>
            <person name="Shomura A."/>
            <person name="Song J."/>
            <person name="Takazaki Y."/>
            <person name="Terasawa K."/>
            <person name="Tsuji K."/>
            <person name="Waki K."/>
            <person name="Yamagata H."/>
            <person name="Yamane H."/>
            <person name="Yoshiki S."/>
            <person name="Yoshihara R."/>
            <person name="Yukawa K."/>
            <person name="Zhong H."/>
            <person name="Iwama H."/>
            <person name="Endo T."/>
            <person name="Ito H."/>
            <person name="Hahn J.H."/>
            <person name="Kim H.-I."/>
            <person name="Eun M.-Y."/>
            <person name="Yano M."/>
            <person name="Jiang J."/>
            <person name="Gojobori T."/>
        </authorList>
    </citation>
    <scope>NUCLEOTIDE SEQUENCE [LARGE SCALE GENOMIC DNA]</scope>
    <source>
        <strain>cv. Nipponbare</strain>
    </source>
</reference>
<reference key="3">
    <citation type="journal article" date="2005" name="Nature">
        <title>The map-based sequence of the rice genome.</title>
        <authorList>
            <consortium name="International rice genome sequencing project (IRGSP)"/>
        </authorList>
    </citation>
    <scope>NUCLEOTIDE SEQUENCE [LARGE SCALE GENOMIC DNA]</scope>
    <source>
        <strain>cv. Nipponbare</strain>
    </source>
</reference>
<reference key="4">
    <citation type="journal article" date="2008" name="Nucleic Acids Res.">
        <title>The rice annotation project database (RAP-DB): 2008 update.</title>
        <authorList>
            <consortium name="The rice annotation project (RAP)"/>
        </authorList>
    </citation>
    <scope>GENOME REANNOTATION</scope>
    <source>
        <strain>cv. Nipponbare</strain>
    </source>
</reference>
<reference key="5">
    <citation type="journal article" date="2013" name="Rice">
        <title>Improvement of the Oryza sativa Nipponbare reference genome using next generation sequence and optical map data.</title>
        <authorList>
            <person name="Kawahara Y."/>
            <person name="de la Bastide M."/>
            <person name="Hamilton J.P."/>
            <person name="Kanamori H."/>
            <person name="McCombie W.R."/>
            <person name="Ouyang S."/>
            <person name="Schwartz D.C."/>
            <person name="Tanaka T."/>
            <person name="Wu J."/>
            <person name="Zhou S."/>
            <person name="Childs K.L."/>
            <person name="Davidson R.M."/>
            <person name="Lin H."/>
            <person name="Quesada-Ocampo L."/>
            <person name="Vaillancourt B."/>
            <person name="Sakai H."/>
            <person name="Lee S.S."/>
            <person name="Kim J."/>
            <person name="Numa H."/>
            <person name="Itoh T."/>
            <person name="Buell C.R."/>
            <person name="Matsumoto T."/>
        </authorList>
    </citation>
    <scope>GENOME REANNOTATION</scope>
    <source>
        <strain>cv. Nipponbare</strain>
    </source>
</reference>
<reference key="6">
    <citation type="journal article" date="2005" name="PLoS Biol.">
        <title>The genomes of Oryza sativa: a history of duplications.</title>
        <authorList>
            <person name="Yu J."/>
            <person name="Wang J."/>
            <person name="Lin W."/>
            <person name="Li S."/>
            <person name="Li H."/>
            <person name="Zhou J."/>
            <person name="Ni P."/>
            <person name="Dong W."/>
            <person name="Hu S."/>
            <person name="Zeng C."/>
            <person name="Zhang J."/>
            <person name="Zhang Y."/>
            <person name="Li R."/>
            <person name="Xu Z."/>
            <person name="Li S."/>
            <person name="Li X."/>
            <person name="Zheng H."/>
            <person name="Cong L."/>
            <person name="Lin L."/>
            <person name="Yin J."/>
            <person name="Geng J."/>
            <person name="Li G."/>
            <person name="Shi J."/>
            <person name="Liu J."/>
            <person name="Lv H."/>
            <person name="Li J."/>
            <person name="Wang J."/>
            <person name="Deng Y."/>
            <person name="Ran L."/>
            <person name="Shi X."/>
            <person name="Wang X."/>
            <person name="Wu Q."/>
            <person name="Li C."/>
            <person name="Ren X."/>
            <person name="Wang J."/>
            <person name="Wang X."/>
            <person name="Li D."/>
            <person name="Liu D."/>
            <person name="Zhang X."/>
            <person name="Ji Z."/>
            <person name="Zhao W."/>
            <person name="Sun Y."/>
            <person name="Zhang Z."/>
            <person name="Bao J."/>
            <person name="Han Y."/>
            <person name="Dong L."/>
            <person name="Ji J."/>
            <person name="Chen P."/>
            <person name="Wu S."/>
            <person name="Liu J."/>
            <person name="Xiao Y."/>
            <person name="Bu D."/>
            <person name="Tan J."/>
            <person name="Yang L."/>
            <person name="Ye C."/>
            <person name="Zhang J."/>
            <person name="Xu J."/>
            <person name="Zhou Y."/>
            <person name="Yu Y."/>
            <person name="Zhang B."/>
            <person name="Zhuang S."/>
            <person name="Wei H."/>
            <person name="Liu B."/>
            <person name="Lei M."/>
            <person name="Yu H."/>
            <person name="Li Y."/>
            <person name="Xu H."/>
            <person name="Wei S."/>
            <person name="He X."/>
            <person name="Fang L."/>
            <person name="Zhang Z."/>
            <person name="Zhang Y."/>
            <person name="Huang X."/>
            <person name="Su Z."/>
            <person name="Tong W."/>
            <person name="Li J."/>
            <person name="Tong Z."/>
            <person name="Li S."/>
            <person name="Ye J."/>
            <person name="Wang L."/>
            <person name="Fang L."/>
            <person name="Lei T."/>
            <person name="Chen C.-S."/>
            <person name="Chen H.-C."/>
            <person name="Xu Z."/>
            <person name="Li H."/>
            <person name="Huang H."/>
            <person name="Zhang F."/>
            <person name="Xu H."/>
            <person name="Li N."/>
            <person name="Zhao C."/>
            <person name="Li S."/>
            <person name="Dong L."/>
            <person name="Huang Y."/>
            <person name="Li L."/>
            <person name="Xi Y."/>
            <person name="Qi Q."/>
            <person name="Li W."/>
            <person name="Zhang B."/>
            <person name="Hu W."/>
            <person name="Zhang Y."/>
            <person name="Tian X."/>
            <person name="Jiao Y."/>
            <person name="Liang X."/>
            <person name="Jin J."/>
            <person name="Gao L."/>
            <person name="Zheng W."/>
            <person name="Hao B."/>
            <person name="Liu S.-M."/>
            <person name="Wang W."/>
            <person name="Yuan L."/>
            <person name="Cao M."/>
            <person name="McDermott J."/>
            <person name="Samudrala R."/>
            <person name="Wang J."/>
            <person name="Wong G.K.-S."/>
            <person name="Yang H."/>
        </authorList>
    </citation>
    <scope>NUCLEOTIDE SEQUENCE [LARGE SCALE GENOMIC DNA]</scope>
    <source>
        <strain>cv. Nipponbare</strain>
    </source>
</reference>
<reference key="7">
    <citation type="journal article" date="2003" name="Science">
        <title>Collection, mapping, and annotation of over 28,000 cDNA clones from japonica rice.</title>
        <authorList>
            <consortium name="The rice full-length cDNA consortium"/>
        </authorList>
    </citation>
    <scope>NUCLEOTIDE SEQUENCE [LARGE SCALE MRNA]</scope>
    <source>
        <strain>cv. Nipponbare</strain>
    </source>
</reference>
<reference key="8">
    <citation type="journal article" date="2006" name="J. Biochem.">
        <title>A higher plant has three different types of RPA heterotrimeric complex.</title>
        <authorList>
            <person name="Ishibashi T."/>
            <person name="Kimura S."/>
            <person name="Sakaguchi K."/>
        </authorList>
    </citation>
    <scope>INTERACTION WITH RPA2A; RPA2B AND RPA2C</scope>
</reference>
<keyword id="KW-0227">DNA damage</keyword>
<keyword id="KW-0233">DNA recombination</keyword>
<keyword id="KW-0234">DNA repair</keyword>
<keyword id="KW-0235">DNA replication</keyword>
<keyword id="KW-0238">DNA-binding</keyword>
<keyword id="KW-0539">Nucleus</keyword>
<keyword id="KW-1185">Reference proteome</keyword>